<keyword id="KW-0687">Ribonucleoprotein</keyword>
<keyword id="KW-0689">Ribosomal protein</keyword>
<keyword id="KW-0694">RNA-binding</keyword>
<keyword id="KW-0699">rRNA-binding</keyword>
<sequence>MALTQERKNEIIAQFRTHETDTGSPEVQIAVLTEQINTLNEHLRTHKKDHHSRRGLLKMVGKRRNLLTYLRNSDITRYRELITKLGLRR</sequence>
<name>RS15_BACC3</name>
<protein>
    <recommendedName>
        <fullName evidence="1">Small ribosomal subunit protein uS15</fullName>
    </recommendedName>
    <alternativeName>
        <fullName evidence="2">30S ribosomal protein S15</fullName>
    </alternativeName>
</protein>
<proteinExistence type="inferred from homology"/>
<reference key="1">
    <citation type="submission" date="2009-02" db="EMBL/GenBank/DDBJ databases">
        <title>Genome sequence of Bacillus cereus 03BB102.</title>
        <authorList>
            <person name="Dodson R.J."/>
            <person name="Jackson P."/>
            <person name="Munk A.C."/>
            <person name="Brettin T."/>
            <person name="Bruce D."/>
            <person name="Detter C."/>
            <person name="Tapia R."/>
            <person name="Han C."/>
            <person name="Sutton G."/>
            <person name="Sims D."/>
        </authorList>
    </citation>
    <scope>NUCLEOTIDE SEQUENCE [LARGE SCALE GENOMIC DNA]</scope>
    <source>
        <strain>03BB102</strain>
    </source>
</reference>
<dbReference type="EMBL" id="CP001407">
    <property type="protein sequence ID" value="ACO29130.1"/>
    <property type="molecule type" value="Genomic_DNA"/>
</dbReference>
<dbReference type="RefSeq" id="WP_001229392.1">
    <property type="nucleotide sequence ID" value="NZ_CP009318.1"/>
</dbReference>
<dbReference type="SMR" id="C1EP30"/>
<dbReference type="GeneID" id="93007304"/>
<dbReference type="KEGG" id="bcx:BCA_3904"/>
<dbReference type="PATRIC" id="fig|572264.18.peg.3861"/>
<dbReference type="Proteomes" id="UP000002210">
    <property type="component" value="Chromosome"/>
</dbReference>
<dbReference type="GO" id="GO:0022627">
    <property type="term" value="C:cytosolic small ribosomal subunit"/>
    <property type="evidence" value="ECO:0007669"/>
    <property type="project" value="TreeGrafter"/>
</dbReference>
<dbReference type="GO" id="GO:0019843">
    <property type="term" value="F:rRNA binding"/>
    <property type="evidence" value="ECO:0007669"/>
    <property type="project" value="UniProtKB-UniRule"/>
</dbReference>
<dbReference type="GO" id="GO:0003735">
    <property type="term" value="F:structural constituent of ribosome"/>
    <property type="evidence" value="ECO:0007669"/>
    <property type="project" value="InterPro"/>
</dbReference>
<dbReference type="GO" id="GO:0006412">
    <property type="term" value="P:translation"/>
    <property type="evidence" value="ECO:0007669"/>
    <property type="project" value="UniProtKB-UniRule"/>
</dbReference>
<dbReference type="CDD" id="cd00353">
    <property type="entry name" value="Ribosomal_S15p_S13e"/>
    <property type="match status" value="1"/>
</dbReference>
<dbReference type="FunFam" id="1.10.287.10:FF:000002">
    <property type="entry name" value="30S ribosomal protein S15"/>
    <property type="match status" value="1"/>
</dbReference>
<dbReference type="Gene3D" id="6.10.250.3130">
    <property type="match status" value="1"/>
</dbReference>
<dbReference type="Gene3D" id="1.10.287.10">
    <property type="entry name" value="S15/NS1, RNA-binding"/>
    <property type="match status" value="1"/>
</dbReference>
<dbReference type="HAMAP" id="MF_01343_B">
    <property type="entry name" value="Ribosomal_uS15_B"/>
    <property type="match status" value="1"/>
</dbReference>
<dbReference type="InterPro" id="IPR000589">
    <property type="entry name" value="Ribosomal_uS15"/>
</dbReference>
<dbReference type="InterPro" id="IPR005290">
    <property type="entry name" value="Ribosomal_uS15_bac-type"/>
</dbReference>
<dbReference type="InterPro" id="IPR009068">
    <property type="entry name" value="uS15_NS1_RNA-bd_sf"/>
</dbReference>
<dbReference type="NCBIfam" id="TIGR00952">
    <property type="entry name" value="S15_bact"/>
    <property type="match status" value="1"/>
</dbReference>
<dbReference type="PANTHER" id="PTHR23321">
    <property type="entry name" value="RIBOSOMAL PROTEIN S15, BACTERIAL AND ORGANELLAR"/>
    <property type="match status" value="1"/>
</dbReference>
<dbReference type="PANTHER" id="PTHR23321:SF26">
    <property type="entry name" value="SMALL RIBOSOMAL SUBUNIT PROTEIN US15M"/>
    <property type="match status" value="1"/>
</dbReference>
<dbReference type="Pfam" id="PF00312">
    <property type="entry name" value="Ribosomal_S15"/>
    <property type="match status" value="1"/>
</dbReference>
<dbReference type="SMART" id="SM01387">
    <property type="entry name" value="Ribosomal_S15"/>
    <property type="match status" value="1"/>
</dbReference>
<dbReference type="SUPFAM" id="SSF47060">
    <property type="entry name" value="S15/NS1 RNA-binding domain"/>
    <property type="match status" value="1"/>
</dbReference>
<dbReference type="PROSITE" id="PS00362">
    <property type="entry name" value="RIBOSOMAL_S15"/>
    <property type="match status" value="1"/>
</dbReference>
<comment type="function">
    <text evidence="1">One of the primary rRNA binding proteins, it binds directly to 16S rRNA where it helps nucleate assembly of the platform of the 30S subunit by binding and bridging several RNA helices of the 16S rRNA.</text>
</comment>
<comment type="function">
    <text evidence="1">Forms an intersubunit bridge (bridge B4) with the 23S rRNA of the 50S subunit in the ribosome.</text>
</comment>
<comment type="subunit">
    <text evidence="1">Part of the 30S ribosomal subunit. Forms a bridge to the 50S subunit in the 70S ribosome, contacting the 23S rRNA.</text>
</comment>
<comment type="similarity">
    <text evidence="1">Belongs to the universal ribosomal protein uS15 family.</text>
</comment>
<gene>
    <name evidence="1" type="primary">rpsO</name>
    <name type="ordered locus">BCA_3904</name>
</gene>
<evidence type="ECO:0000255" key="1">
    <source>
        <dbReference type="HAMAP-Rule" id="MF_01343"/>
    </source>
</evidence>
<evidence type="ECO:0000305" key="2"/>
<feature type="chain" id="PRO_1000166400" description="Small ribosomal subunit protein uS15">
    <location>
        <begin position="1"/>
        <end position="89"/>
    </location>
</feature>
<accession>C1EP30</accession>
<organism>
    <name type="scientific">Bacillus cereus (strain 03BB102)</name>
    <dbReference type="NCBI Taxonomy" id="572264"/>
    <lineage>
        <taxon>Bacteria</taxon>
        <taxon>Bacillati</taxon>
        <taxon>Bacillota</taxon>
        <taxon>Bacilli</taxon>
        <taxon>Bacillales</taxon>
        <taxon>Bacillaceae</taxon>
        <taxon>Bacillus</taxon>
        <taxon>Bacillus cereus group</taxon>
    </lineage>
</organism>